<sequence length="368" mass="40988">MSETAKKVIVGMSGGVDSSVSAWLLQQQGYQVEGLFMKNWEEDDGEEYCTAAADLADAQAVCDKLGIELHTVNFAAEYWDNVFELFLAEYKAGRTPNPDILCNKEIKFKAFLEFAAEDLGADYIATGHYVRRADVDGKSRLLRGLDSNKDQSYFLYTLSHEQIAKSLFPVGELEKPQVRKIAEDLGLVTAKKKDSTGICFIGERKFREFLGRYLPAQPGKIITVDGDEIGEHQGLMYHTLGQRKGLGIGGTKEGTEEPWYVVDKDVENNILIVAQGHEHPRLMSIGLIAQQLHWVDREPFTGTMRCTVKTRYRQTDIPCTVKALDDDRIEVIFDEPVAAVTPGQSAVFYNGEVCLGGGIIEQRLPLPV</sequence>
<gene>
    <name evidence="1" type="primary">mnmA</name>
    <name type="ordered locus">SDY_2019</name>
</gene>
<proteinExistence type="inferred from homology"/>
<evidence type="ECO:0000255" key="1">
    <source>
        <dbReference type="HAMAP-Rule" id="MF_00144"/>
    </source>
</evidence>
<evidence type="ECO:0000305" key="2"/>
<protein>
    <recommendedName>
        <fullName evidence="1">tRNA-specific 2-thiouridylase MnmA</fullName>
        <ecNumber evidence="1">2.8.1.13</ecNumber>
    </recommendedName>
</protein>
<name>MNMA_SHIDS</name>
<feature type="chain" id="PRO_0000349797" description="tRNA-specific 2-thiouridylase MnmA">
    <location>
        <begin position="1"/>
        <end position="368"/>
    </location>
</feature>
<feature type="region of interest" description="Interaction with target base in tRNA" evidence="1">
    <location>
        <begin position="97"/>
        <end position="99"/>
    </location>
</feature>
<feature type="region of interest" description="Interaction with tRNA" evidence="1">
    <location>
        <begin position="149"/>
        <end position="151"/>
    </location>
</feature>
<feature type="region of interest" description="Interaction with tRNA" evidence="1">
    <location>
        <begin position="311"/>
        <end position="312"/>
    </location>
</feature>
<feature type="active site" description="Nucleophile" evidence="1">
    <location>
        <position position="102"/>
    </location>
</feature>
<feature type="active site" description="Cysteine persulfide intermediate" evidence="1">
    <location>
        <position position="199"/>
    </location>
</feature>
<feature type="binding site" evidence="1">
    <location>
        <begin position="11"/>
        <end position="18"/>
    </location>
    <ligand>
        <name>ATP</name>
        <dbReference type="ChEBI" id="CHEBI:30616"/>
    </ligand>
</feature>
<feature type="binding site" evidence="1">
    <location>
        <position position="37"/>
    </location>
    <ligand>
        <name>ATP</name>
        <dbReference type="ChEBI" id="CHEBI:30616"/>
    </ligand>
</feature>
<feature type="binding site" evidence="1">
    <location>
        <position position="127"/>
    </location>
    <ligand>
        <name>ATP</name>
        <dbReference type="ChEBI" id="CHEBI:30616"/>
    </ligand>
</feature>
<feature type="site" description="Interaction with tRNA" evidence="1">
    <location>
        <position position="128"/>
    </location>
</feature>
<feature type="site" description="Interaction with tRNA" evidence="1">
    <location>
        <position position="344"/>
    </location>
</feature>
<feature type="disulfide bond" description="Alternate" evidence="1">
    <location>
        <begin position="102"/>
        <end position="199"/>
    </location>
</feature>
<organism>
    <name type="scientific">Shigella dysenteriae serotype 1 (strain Sd197)</name>
    <dbReference type="NCBI Taxonomy" id="300267"/>
    <lineage>
        <taxon>Bacteria</taxon>
        <taxon>Pseudomonadati</taxon>
        <taxon>Pseudomonadota</taxon>
        <taxon>Gammaproteobacteria</taxon>
        <taxon>Enterobacterales</taxon>
        <taxon>Enterobacteriaceae</taxon>
        <taxon>Shigella</taxon>
    </lineage>
</organism>
<reference key="1">
    <citation type="journal article" date="2005" name="Nucleic Acids Res.">
        <title>Genome dynamics and diversity of Shigella species, the etiologic agents of bacillary dysentery.</title>
        <authorList>
            <person name="Yang F."/>
            <person name="Yang J."/>
            <person name="Zhang X."/>
            <person name="Chen L."/>
            <person name="Jiang Y."/>
            <person name="Yan Y."/>
            <person name="Tang X."/>
            <person name="Wang J."/>
            <person name="Xiong Z."/>
            <person name="Dong J."/>
            <person name="Xue Y."/>
            <person name="Zhu Y."/>
            <person name="Xu X."/>
            <person name="Sun L."/>
            <person name="Chen S."/>
            <person name="Nie H."/>
            <person name="Peng J."/>
            <person name="Xu J."/>
            <person name="Wang Y."/>
            <person name="Yuan Z."/>
            <person name="Wen Y."/>
            <person name="Yao Z."/>
            <person name="Shen Y."/>
            <person name="Qiang B."/>
            <person name="Hou Y."/>
            <person name="Yu J."/>
            <person name="Jin Q."/>
        </authorList>
    </citation>
    <scope>NUCLEOTIDE SEQUENCE [LARGE SCALE GENOMIC DNA]</scope>
    <source>
        <strain>Sd197</strain>
    </source>
</reference>
<dbReference type="EC" id="2.8.1.13" evidence="1"/>
<dbReference type="EMBL" id="CP000034">
    <property type="protein sequence ID" value="ABB62114.1"/>
    <property type="status" value="ALT_INIT"/>
    <property type="molecule type" value="Genomic_DNA"/>
</dbReference>
<dbReference type="RefSeq" id="WP_005022119.1">
    <property type="nucleotide sequence ID" value="NC_007606.1"/>
</dbReference>
<dbReference type="RefSeq" id="YP_403605.2">
    <property type="nucleotide sequence ID" value="NC_007606.1"/>
</dbReference>
<dbReference type="SMR" id="Q32EZ1"/>
<dbReference type="STRING" id="300267.SDY_2019"/>
<dbReference type="EnsemblBacteria" id="ABB62114">
    <property type="protein sequence ID" value="ABB62114"/>
    <property type="gene ID" value="SDY_2019"/>
</dbReference>
<dbReference type="KEGG" id="sdy:SDY_2019"/>
<dbReference type="PATRIC" id="fig|300267.13.peg.2432"/>
<dbReference type="HOGENOM" id="CLU_035188_1_0_6"/>
<dbReference type="Proteomes" id="UP000002716">
    <property type="component" value="Chromosome"/>
</dbReference>
<dbReference type="GO" id="GO:0005737">
    <property type="term" value="C:cytoplasm"/>
    <property type="evidence" value="ECO:0007669"/>
    <property type="project" value="UniProtKB-SubCell"/>
</dbReference>
<dbReference type="GO" id="GO:0005524">
    <property type="term" value="F:ATP binding"/>
    <property type="evidence" value="ECO:0007669"/>
    <property type="project" value="UniProtKB-KW"/>
</dbReference>
<dbReference type="GO" id="GO:0000049">
    <property type="term" value="F:tRNA binding"/>
    <property type="evidence" value="ECO:0007669"/>
    <property type="project" value="UniProtKB-KW"/>
</dbReference>
<dbReference type="GO" id="GO:0103016">
    <property type="term" value="F:tRNA-uridine 2-sulfurtransferase activity"/>
    <property type="evidence" value="ECO:0007669"/>
    <property type="project" value="UniProtKB-EC"/>
</dbReference>
<dbReference type="GO" id="GO:0002143">
    <property type="term" value="P:tRNA wobble position uridine thiolation"/>
    <property type="evidence" value="ECO:0007669"/>
    <property type="project" value="TreeGrafter"/>
</dbReference>
<dbReference type="CDD" id="cd01998">
    <property type="entry name" value="MnmA_TRMU-like"/>
    <property type="match status" value="1"/>
</dbReference>
<dbReference type="FunFam" id="2.30.30.280:FF:000001">
    <property type="entry name" value="tRNA-specific 2-thiouridylase MnmA"/>
    <property type="match status" value="1"/>
</dbReference>
<dbReference type="FunFam" id="2.40.30.10:FF:000023">
    <property type="entry name" value="tRNA-specific 2-thiouridylase MnmA"/>
    <property type="match status" value="1"/>
</dbReference>
<dbReference type="FunFam" id="3.40.50.620:FF:000004">
    <property type="entry name" value="tRNA-specific 2-thiouridylase MnmA"/>
    <property type="match status" value="1"/>
</dbReference>
<dbReference type="Gene3D" id="2.30.30.280">
    <property type="entry name" value="Adenine nucleotide alpha hydrolases-like domains"/>
    <property type="match status" value="1"/>
</dbReference>
<dbReference type="Gene3D" id="3.40.50.620">
    <property type="entry name" value="HUPs"/>
    <property type="match status" value="1"/>
</dbReference>
<dbReference type="Gene3D" id="2.40.30.10">
    <property type="entry name" value="Translation factors"/>
    <property type="match status" value="1"/>
</dbReference>
<dbReference type="HAMAP" id="MF_00144">
    <property type="entry name" value="tRNA_thiouridyl_MnmA"/>
    <property type="match status" value="1"/>
</dbReference>
<dbReference type="InterPro" id="IPR004506">
    <property type="entry name" value="MnmA-like"/>
</dbReference>
<dbReference type="InterPro" id="IPR046885">
    <property type="entry name" value="MnmA-like_C"/>
</dbReference>
<dbReference type="InterPro" id="IPR046884">
    <property type="entry name" value="MnmA-like_central"/>
</dbReference>
<dbReference type="InterPro" id="IPR023382">
    <property type="entry name" value="MnmA-like_central_sf"/>
</dbReference>
<dbReference type="InterPro" id="IPR014729">
    <property type="entry name" value="Rossmann-like_a/b/a_fold"/>
</dbReference>
<dbReference type="NCBIfam" id="NF001138">
    <property type="entry name" value="PRK00143.1"/>
    <property type="match status" value="1"/>
</dbReference>
<dbReference type="NCBIfam" id="TIGR00420">
    <property type="entry name" value="trmU"/>
    <property type="match status" value="1"/>
</dbReference>
<dbReference type="PANTHER" id="PTHR11933:SF5">
    <property type="entry name" value="MITOCHONDRIAL TRNA-SPECIFIC 2-THIOURIDYLASE 1"/>
    <property type="match status" value="1"/>
</dbReference>
<dbReference type="PANTHER" id="PTHR11933">
    <property type="entry name" value="TRNA 5-METHYLAMINOMETHYL-2-THIOURIDYLATE -METHYLTRANSFERASE"/>
    <property type="match status" value="1"/>
</dbReference>
<dbReference type="Pfam" id="PF03054">
    <property type="entry name" value="tRNA_Me_trans"/>
    <property type="match status" value="1"/>
</dbReference>
<dbReference type="Pfam" id="PF20258">
    <property type="entry name" value="tRNA_Me_trans_C"/>
    <property type="match status" value="1"/>
</dbReference>
<dbReference type="Pfam" id="PF20259">
    <property type="entry name" value="tRNA_Me_trans_M"/>
    <property type="match status" value="1"/>
</dbReference>
<dbReference type="SUPFAM" id="SSF52402">
    <property type="entry name" value="Adenine nucleotide alpha hydrolases-like"/>
    <property type="match status" value="1"/>
</dbReference>
<keyword id="KW-0067">ATP-binding</keyword>
<keyword id="KW-0963">Cytoplasm</keyword>
<keyword id="KW-1015">Disulfide bond</keyword>
<keyword id="KW-0547">Nucleotide-binding</keyword>
<keyword id="KW-1185">Reference proteome</keyword>
<keyword id="KW-0694">RNA-binding</keyword>
<keyword id="KW-0808">Transferase</keyword>
<keyword id="KW-0819">tRNA processing</keyword>
<keyword id="KW-0820">tRNA-binding</keyword>
<comment type="function">
    <text evidence="1">Catalyzes the 2-thiolation of uridine at the wobble position (U34) of tRNA(Lys), tRNA(Glu) and tRNA(Gln), leading to the formation of s(2)U34, the first step of tRNA-mnm(5)s(2)U34 synthesis. Sulfur is provided by IscS, via a sulfur-relay system. Binds ATP and its substrate tRNAs.</text>
</comment>
<comment type="catalytic activity">
    <reaction evidence="1">
        <text>S-sulfanyl-L-cysteinyl-[protein] + uridine(34) in tRNA + AH2 + ATP = 2-thiouridine(34) in tRNA + L-cysteinyl-[protein] + A + AMP + diphosphate + H(+)</text>
        <dbReference type="Rhea" id="RHEA:47032"/>
        <dbReference type="Rhea" id="RHEA-COMP:10131"/>
        <dbReference type="Rhea" id="RHEA-COMP:11726"/>
        <dbReference type="Rhea" id="RHEA-COMP:11727"/>
        <dbReference type="Rhea" id="RHEA-COMP:11728"/>
        <dbReference type="ChEBI" id="CHEBI:13193"/>
        <dbReference type="ChEBI" id="CHEBI:15378"/>
        <dbReference type="ChEBI" id="CHEBI:17499"/>
        <dbReference type="ChEBI" id="CHEBI:29950"/>
        <dbReference type="ChEBI" id="CHEBI:30616"/>
        <dbReference type="ChEBI" id="CHEBI:33019"/>
        <dbReference type="ChEBI" id="CHEBI:61963"/>
        <dbReference type="ChEBI" id="CHEBI:65315"/>
        <dbReference type="ChEBI" id="CHEBI:87170"/>
        <dbReference type="ChEBI" id="CHEBI:456215"/>
        <dbReference type="EC" id="2.8.1.13"/>
    </reaction>
</comment>
<comment type="subunit">
    <text evidence="1">Interacts with TusE.</text>
</comment>
<comment type="subcellular location">
    <subcellularLocation>
        <location evidence="1">Cytoplasm</location>
    </subcellularLocation>
</comment>
<comment type="similarity">
    <text evidence="1">Belongs to the MnmA/TRMU family.</text>
</comment>
<comment type="sequence caution" evidence="2">
    <conflict type="erroneous initiation">
        <sequence resource="EMBL-CDS" id="ABB62114"/>
    </conflict>
</comment>
<accession>Q32EZ1</accession>